<sequence length="70" mass="8065">MSQKSHKEKLEKPAYKCMKQYICEKVSAHENDVVCITVQRFFQVVDGHMKEVRPMSNQIGLQSGPVVEKN</sequence>
<accession>G2TRU4</accession>
<protein>
    <recommendedName>
        <fullName>Uncharacterized protein SPCC1259.16</fullName>
    </recommendedName>
</protein>
<keyword id="KW-1185">Reference proteome</keyword>
<organism>
    <name type="scientific">Schizosaccharomyces pombe (strain 972 / ATCC 24843)</name>
    <name type="common">Fission yeast</name>
    <dbReference type="NCBI Taxonomy" id="284812"/>
    <lineage>
        <taxon>Eukaryota</taxon>
        <taxon>Fungi</taxon>
        <taxon>Dikarya</taxon>
        <taxon>Ascomycota</taxon>
        <taxon>Taphrinomycotina</taxon>
        <taxon>Schizosaccharomycetes</taxon>
        <taxon>Schizosaccharomycetales</taxon>
        <taxon>Schizosaccharomycetaceae</taxon>
        <taxon>Schizosaccharomyces</taxon>
    </lineage>
</organism>
<feature type="chain" id="PRO_0000416622" description="Uncharacterized protein SPCC1259.16">
    <location>
        <begin position="1"/>
        <end position="70"/>
    </location>
</feature>
<dbReference type="EMBL" id="CU329672">
    <property type="protein sequence ID" value="CCD31394.1"/>
    <property type="molecule type" value="Genomic_DNA"/>
</dbReference>
<dbReference type="RefSeq" id="XP_004001747.1">
    <property type="nucleotide sequence ID" value="XM_004001698.1"/>
</dbReference>
<dbReference type="PaxDb" id="4896-SPCC1259.16.1"/>
<dbReference type="EnsemblFungi" id="SPCC1259.16.1">
    <property type="protein sequence ID" value="SPCC1259.16.1:pep"/>
    <property type="gene ID" value="SPCC1259.16"/>
</dbReference>
<dbReference type="PomBase" id="SPCC1259.16"/>
<dbReference type="VEuPathDB" id="FungiDB:SPCC1259.16"/>
<dbReference type="HOGENOM" id="CLU_2759259_0_0_1"/>
<dbReference type="InParanoid" id="G2TRU4"/>
<dbReference type="PRO" id="PR:G2TRU4"/>
<dbReference type="Proteomes" id="UP000002485">
    <property type="component" value="Chromosome III"/>
</dbReference>
<proteinExistence type="predicted"/>
<gene>
    <name type="ORF">SPCC1259.16</name>
</gene>
<reference key="1">
    <citation type="journal article" date="2002" name="Nature">
        <title>The genome sequence of Schizosaccharomyces pombe.</title>
        <authorList>
            <person name="Wood V."/>
            <person name="Gwilliam R."/>
            <person name="Rajandream M.A."/>
            <person name="Lyne M.H."/>
            <person name="Lyne R."/>
            <person name="Stewart A."/>
            <person name="Sgouros J.G."/>
            <person name="Peat N."/>
            <person name="Hayles J."/>
            <person name="Baker S.G."/>
            <person name="Basham D."/>
            <person name="Bowman S."/>
            <person name="Brooks K."/>
            <person name="Brown D."/>
            <person name="Brown S."/>
            <person name="Chillingworth T."/>
            <person name="Churcher C.M."/>
            <person name="Collins M."/>
            <person name="Connor R."/>
            <person name="Cronin A."/>
            <person name="Davis P."/>
            <person name="Feltwell T."/>
            <person name="Fraser A."/>
            <person name="Gentles S."/>
            <person name="Goble A."/>
            <person name="Hamlin N."/>
            <person name="Harris D.E."/>
            <person name="Hidalgo J."/>
            <person name="Hodgson G."/>
            <person name="Holroyd S."/>
            <person name="Hornsby T."/>
            <person name="Howarth S."/>
            <person name="Huckle E.J."/>
            <person name="Hunt S."/>
            <person name="Jagels K."/>
            <person name="James K.D."/>
            <person name="Jones L."/>
            <person name="Jones M."/>
            <person name="Leather S."/>
            <person name="McDonald S."/>
            <person name="McLean J."/>
            <person name="Mooney P."/>
            <person name="Moule S."/>
            <person name="Mungall K.L."/>
            <person name="Murphy L.D."/>
            <person name="Niblett D."/>
            <person name="Odell C."/>
            <person name="Oliver K."/>
            <person name="O'Neil S."/>
            <person name="Pearson D."/>
            <person name="Quail M.A."/>
            <person name="Rabbinowitsch E."/>
            <person name="Rutherford K.M."/>
            <person name="Rutter S."/>
            <person name="Saunders D."/>
            <person name="Seeger K."/>
            <person name="Sharp S."/>
            <person name="Skelton J."/>
            <person name="Simmonds M.N."/>
            <person name="Squares R."/>
            <person name="Squares S."/>
            <person name="Stevens K."/>
            <person name="Taylor K."/>
            <person name="Taylor R.G."/>
            <person name="Tivey A."/>
            <person name="Walsh S.V."/>
            <person name="Warren T."/>
            <person name="Whitehead S."/>
            <person name="Woodward J.R."/>
            <person name="Volckaert G."/>
            <person name="Aert R."/>
            <person name="Robben J."/>
            <person name="Grymonprez B."/>
            <person name="Weltjens I."/>
            <person name="Vanstreels E."/>
            <person name="Rieger M."/>
            <person name="Schaefer M."/>
            <person name="Mueller-Auer S."/>
            <person name="Gabel C."/>
            <person name="Fuchs M."/>
            <person name="Duesterhoeft A."/>
            <person name="Fritzc C."/>
            <person name="Holzer E."/>
            <person name="Moestl D."/>
            <person name="Hilbert H."/>
            <person name="Borzym K."/>
            <person name="Langer I."/>
            <person name="Beck A."/>
            <person name="Lehrach H."/>
            <person name="Reinhardt R."/>
            <person name="Pohl T.M."/>
            <person name="Eger P."/>
            <person name="Zimmermann W."/>
            <person name="Wedler H."/>
            <person name="Wambutt R."/>
            <person name="Purnelle B."/>
            <person name="Goffeau A."/>
            <person name="Cadieu E."/>
            <person name="Dreano S."/>
            <person name="Gloux S."/>
            <person name="Lelaure V."/>
            <person name="Mottier S."/>
            <person name="Galibert F."/>
            <person name="Aves S.J."/>
            <person name="Xiang Z."/>
            <person name="Hunt C."/>
            <person name="Moore K."/>
            <person name="Hurst S.M."/>
            <person name="Lucas M."/>
            <person name="Rochet M."/>
            <person name="Gaillardin C."/>
            <person name="Tallada V.A."/>
            <person name="Garzon A."/>
            <person name="Thode G."/>
            <person name="Daga R.R."/>
            <person name="Cruzado L."/>
            <person name="Jimenez J."/>
            <person name="Sanchez M."/>
            <person name="del Rey F."/>
            <person name="Benito J."/>
            <person name="Dominguez A."/>
            <person name="Revuelta J.L."/>
            <person name="Moreno S."/>
            <person name="Armstrong J."/>
            <person name="Forsburg S.L."/>
            <person name="Cerutti L."/>
            <person name="Lowe T."/>
            <person name="McCombie W.R."/>
            <person name="Paulsen I."/>
            <person name="Potashkin J."/>
            <person name="Shpakovski G.V."/>
            <person name="Ussery D."/>
            <person name="Barrell B.G."/>
            <person name="Nurse P."/>
        </authorList>
    </citation>
    <scope>NUCLEOTIDE SEQUENCE [LARGE SCALE GENOMIC DNA]</scope>
    <source>
        <strain>972 / ATCC 24843</strain>
    </source>
</reference>
<reference key="2">
    <citation type="journal article" date="2011" name="Science">
        <title>Comparative functional genomics of the fission yeasts.</title>
        <authorList>
            <person name="Rhind N."/>
            <person name="Chen Z."/>
            <person name="Yassour M."/>
            <person name="Thompson D.A."/>
            <person name="Haas B.J."/>
            <person name="Habib N."/>
            <person name="Wapinski I."/>
            <person name="Roy S."/>
            <person name="Lin M.F."/>
            <person name="Heiman D.I."/>
            <person name="Young S.K."/>
            <person name="Furuya K."/>
            <person name="Guo Y."/>
            <person name="Pidoux A."/>
            <person name="Chen H.M."/>
            <person name="Robbertse B."/>
            <person name="Goldberg J.M."/>
            <person name="Aoki K."/>
            <person name="Bayne E.H."/>
            <person name="Berlin A.M."/>
            <person name="Desjardins C.A."/>
            <person name="Dobbs E."/>
            <person name="Dukaj L."/>
            <person name="Fan L."/>
            <person name="FitzGerald M.G."/>
            <person name="French C."/>
            <person name="Gujja S."/>
            <person name="Hansen K."/>
            <person name="Keifenheim D."/>
            <person name="Levin J.Z."/>
            <person name="Mosher R.A."/>
            <person name="Mueller C.A."/>
            <person name="Pfiffner J."/>
            <person name="Priest M."/>
            <person name="Russ C."/>
            <person name="Smialowska A."/>
            <person name="Swoboda P."/>
            <person name="Sykes S.M."/>
            <person name="Vaughn M."/>
            <person name="Vengrova S."/>
            <person name="Yoder R."/>
            <person name="Zeng Q."/>
            <person name="Allshire R."/>
            <person name="Baulcombe D."/>
            <person name="Birren B.W."/>
            <person name="Brown W."/>
            <person name="Ekwall K."/>
            <person name="Kellis M."/>
            <person name="Leatherwood J."/>
            <person name="Levin H."/>
            <person name="Margalit H."/>
            <person name="Martienssen R."/>
            <person name="Nieduszynski C.A."/>
            <person name="Spatafora J.W."/>
            <person name="Friedman N."/>
            <person name="Dalgaard J.Z."/>
            <person name="Baumann P."/>
            <person name="Niki H."/>
            <person name="Regev A."/>
            <person name="Nusbaum C."/>
        </authorList>
    </citation>
    <scope>IDENTIFICATION</scope>
</reference>
<name>YC5G_SCHPO</name>